<organism>
    <name type="scientific">Escherichia fergusonii (strain ATCC 35469 / DSM 13698 / CCUG 18766 / IAM 14443 / JCM 21226 / LMG 7866 / NBRC 102419 / NCTC 12128 / CDC 0568-73)</name>
    <dbReference type="NCBI Taxonomy" id="585054"/>
    <lineage>
        <taxon>Bacteria</taxon>
        <taxon>Pseudomonadati</taxon>
        <taxon>Pseudomonadota</taxon>
        <taxon>Gammaproteobacteria</taxon>
        <taxon>Enterobacterales</taxon>
        <taxon>Enterobacteriaceae</taxon>
        <taxon>Escherichia</taxon>
    </lineage>
</organism>
<reference key="1">
    <citation type="journal article" date="2009" name="PLoS Genet.">
        <title>Organised genome dynamics in the Escherichia coli species results in highly diverse adaptive paths.</title>
        <authorList>
            <person name="Touchon M."/>
            <person name="Hoede C."/>
            <person name="Tenaillon O."/>
            <person name="Barbe V."/>
            <person name="Baeriswyl S."/>
            <person name="Bidet P."/>
            <person name="Bingen E."/>
            <person name="Bonacorsi S."/>
            <person name="Bouchier C."/>
            <person name="Bouvet O."/>
            <person name="Calteau A."/>
            <person name="Chiapello H."/>
            <person name="Clermont O."/>
            <person name="Cruveiller S."/>
            <person name="Danchin A."/>
            <person name="Diard M."/>
            <person name="Dossat C."/>
            <person name="Karoui M.E."/>
            <person name="Frapy E."/>
            <person name="Garry L."/>
            <person name="Ghigo J.M."/>
            <person name="Gilles A.M."/>
            <person name="Johnson J."/>
            <person name="Le Bouguenec C."/>
            <person name="Lescat M."/>
            <person name="Mangenot S."/>
            <person name="Martinez-Jehanne V."/>
            <person name="Matic I."/>
            <person name="Nassif X."/>
            <person name="Oztas S."/>
            <person name="Petit M.A."/>
            <person name="Pichon C."/>
            <person name="Rouy Z."/>
            <person name="Ruf C.S."/>
            <person name="Schneider D."/>
            <person name="Tourret J."/>
            <person name="Vacherie B."/>
            <person name="Vallenet D."/>
            <person name="Medigue C."/>
            <person name="Rocha E.P.C."/>
            <person name="Denamur E."/>
        </authorList>
    </citation>
    <scope>NUCLEOTIDE SEQUENCE [LARGE SCALE GENOMIC DNA]</scope>
    <source>
        <strain>ATCC 35469 / DSM 13698 / BCRC 15582 / CCUG 18766 / IAM 14443 / JCM 21226 / LMG 7866 / NBRC 102419 / NCTC 12128 / CDC 0568-73</strain>
    </source>
</reference>
<name>DNLJ_ESCF3</name>
<keyword id="KW-0227">DNA damage</keyword>
<keyword id="KW-0234">DNA repair</keyword>
<keyword id="KW-0235">DNA replication</keyword>
<keyword id="KW-0436">Ligase</keyword>
<keyword id="KW-0460">Magnesium</keyword>
<keyword id="KW-0464">Manganese</keyword>
<keyword id="KW-0479">Metal-binding</keyword>
<keyword id="KW-0520">NAD</keyword>
<keyword id="KW-0862">Zinc</keyword>
<evidence type="ECO:0000255" key="1">
    <source>
        <dbReference type="HAMAP-Rule" id="MF_01588"/>
    </source>
</evidence>
<gene>
    <name evidence="1" type="primary">ligA</name>
    <name type="ordered locus">EFER_0763</name>
</gene>
<sequence>MESIEQQLTELRTTLRHHEYLYHVMDAPEIPDAEYDRLMRELRELETKHPELITPDSPTQRVGAAPLAAFSQIRHEVPMLSLDNVFDEESFLAFNKRVQDRLKSNEKVTWCCELKLDGLAVSILYENGVLVSAATRGDGTTGEDITSNVRTIRAIPLKLHGENIPARLEVRGEVFLPQAGFEKINEDARRTGGKVFANPRNAAAGSLRQLDPRITAKRPLTFFCYGVGVLEGGELPDTHLGRLLQFKKWGLPVSDRVTLCESAEEVLAFYHKVEEDRPTLGFDIDGVVIKVNSLAQQEQLGFVARAPRWAVAFKFPAQEQMTFVRDVEFQVGRTGAITPVARLEPVHVAGVLVSNATLHNADEIERLGLRIGDKVVIRRAGDVIPQVVNVVLSERPEDTREVVFPTHCPVCGSDVERVEGEAVARCTGGLICGAQRKESLKHFVSRRAMDVDGMGDKIIDQLVEKEYVHTPADLFKLTAGKLTGLERMGPKSAQNVVNALEKAKETTFARFLYALGIREVGEATAAGLAAYFGTLEALEAASIEELQKVPDVGIVVASHVHNFFAEESNRNVISELLAEGVHWPAPVVINAEEIDSPFAGKTVVLTGSLSQMSRDDAKARLVELGAKVAGSVSKKTDLVIAGEAAGSKLAKAQELGIEVIDETEMLRLLGS</sequence>
<feature type="chain" id="PRO_0000380382" description="DNA ligase">
    <location>
        <begin position="1"/>
        <end position="671"/>
    </location>
</feature>
<feature type="domain" description="BRCT" evidence="1">
    <location>
        <begin position="593"/>
        <end position="671"/>
    </location>
</feature>
<feature type="active site" description="N6-AMP-lysine intermediate" evidence="1">
    <location>
        <position position="115"/>
    </location>
</feature>
<feature type="binding site" evidence="1">
    <location>
        <begin position="32"/>
        <end position="36"/>
    </location>
    <ligand>
        <name>NAD(+)</name>
        <dbReference type="ChEBI" id="CHEBI:57540"/>
    </ligand>
</feature>
<feature type="binding site" evidence="1">
    <location>
        <begin position="81"/>
        <end position="82"/>
    </location>
    <ligand>
        <name>NAD(+)</name>
        <dbReference type="ChEBI" id="CHEBI:57540"/>
    </ligand>
</feature>
<feature type="binding site" evidence="1">
    <location>
        <position position="113"/>
    </location>
    <ligand>
        <name>NAD(+)</name>
        <dbReference type="ChEBI" id="CHEBI:57540"/>
    </ligand>
</feature>
<feature type="binding site" evidence="1">
    <location>
        <position position="136"/>
    </location>
    <ligand>
        <name>NAD(+)</name>
        <dbReference type="ChEBI" id="CHEBI:57540"/>
    </ligand>
</feature>
<feature type="binding site" evidence="1">
    <location>
        <position position="173"/>
    </location>
    <ligand>
        <name>NAD(+)</name>
        <dbReference type="ChEBI" id="CHEBI:57540"/>
    </ligand>
</feature>
<feature type="binding site" evidence="1">
    <location>
        <position position="290"/>
    </location>
    <ligand>
        <name>NAD(+)</name>
        <dbReference type="ChEBI" id="CHEBI:57540"/>
    </ligand>
</feature>
<feature type="binding site" evidence="1">
    <location>
        <position position="314"/>
    </location>
    <ligand>
        <name>NAD(+)</name>
        <dbReference type="ChEBI" id="CHEBI:57540"/>
    </ligand>
</feature>
<feature type="binding site" evidence="1">
    <location>
        <position position="408"/>
    </location>
    <ligand>
        <name>Zn(2+)</name>
        <dbReference type="ChEBI" id="CHEBI:29105"/>
    </ligand>
</feature>
<feature type="binding site" evidence="1">
    <location>
        <position position="411"/>
    </location>
    <ligand>
        <name>Zn(2+)</name>
        <dbReference type="ChEBI" id="CHEBI:29105"/>
    </ligand>
</feature>
<feature type="binding site" evidence="1">
    <location>
        <position position="426"/>
    </location>
    <ligand>
        <name>Zn(2+)</name>
        <dbReference type="ChEBI" id="CHEBI:29105"/>
    </ligand>
</feature>
<feature type="binding site" evidence="1">
    <location>
        <position position="432"/>
    </location>
    <ligand>
        <name>Zn(2+)</name>
        <dbReference type="ChEBI" id="CHEBI:29105"/>
    </ligand>
</feature>
<proteinExistence type="inferred from homology"/>
<dbReference type="EC" id="6.5.1.2" evidence="1"/>
<dbReference type="EMBL" id="CU928158">
    <property type="protein sequence ID" value="CAQ88301.1"/>
    <property type="molecule type" value="Genomic_DNA"/>
</dbReference>
<dbReference type="RefSeq" id="WP_000443686.1">
    <property type="nucleotide sequence ID" value="NC_011740.1"/>
</dbReference>
<dbReference type="SMR" id="B7LL73"/>
<dbReference type="GeneID" id="75058182"/>
<dbReference type="KEGG" id="efe:EFER_0763"/>
<dbReference type="HOGENOM" id="CLU_007764_2_1_6"/>
<dbReference type="OrthoDB" id="9759736at2"/>
<dbReference type="Proteomes" id="UP000000745">
    <property type="component" value="Chromosome"/>
</dbReference>
<dbReference type="GO" id="GO:0005829">
    <property type="term" value="C:cytosol"/>
    <property type="evidence" value="ECO:0007669"/>
    <property type="project" value="TreeGrafter"/>
</dbReference>
<dbReference type="GO" id="GO:0003677">
    <property type="term" value="F:DNA binding"/>
    <property type="evidence" value="ECO:0007669"/>
    <property type="project" value="InterPro"/>
</dbReference>
<dbReference type="GO" id="GO:0003911">
    <property type="term" value="F:DNA ligase (NAD+) activity"/>
    <property type="evidence" value="ECO:0007669"/>
    <property type="project" value="UniProtKB-UniRule"/>
</dbReference>
<dbReference type="GO" id="GO:0046872">
    <property type="term" value="F:metal ion binding"/>
    <property type="evidence" value="ECO:0007669"/>
    <property type="project" value="UniProtKB-KW"/>
</dbReference>
<dbReference type="GO" id="GO:0006281">
    <property type="term" value="P:DNA repair"/>
    <property type="evidence" value="ECO:0007669"/>
    <property type="project" value="UniProtKB-KW"/>
</dbReference>
<dbReference type="GO" id="GO:0006260">
    <property type="term" value="P:DNA replication"/>
    <property type="evidence" value="ECO:0007669"/>
    <property type="project" value="UniProtKB-KW"/>
</dbReference>
<dbReference type="CDD" id="cd17748">
    <property type="entry name" value="BRCT_DNA_ligase_like"/>
    <property type="match status" value="1"/>
</dbReference>
<dbReference type="CDD" id="cd00114">
    <property type="entry name" value="LIGANc"/>
    <property type="match status" value="1"/>
</dbReference>
<dbReference type="FunFam" id="1.10.150.20:FF:000006">
    <property type="entry name" value="DNA ligase"/>
    <property type="match status" value="1"/>
</dbReference>
<dbReference type="FunFam" id="1.10.150.20:FF:000007">
    <property type="entry name" value="DNA ligase"/>
    <property type="match status" value="1"/>
</dbReference>
<dbReference type="FunFam" id="1.10.287.610:FF:000002">
    <property type="entry name" value="DNA ligase"/>
    <property type="match status" value="1"/>
</dbReference>
<dbReference type="FunFam" id="2.40.50.140:FF:000012">
    <property type="entry name" value="DNA ligase"/>
    <property type="match status" value="1"/>
</dbReference>
<dbReference type="FunFam" id="3.30.470.30:FF:000001">
    <property type="entry name" value="DNA ligase"/>
    <property type="match status" value="1"/>
</dbReference>
<dbReference type="FunFam" id="3.40.50.10190:FF:000004">
    <property type="entry name" value="DNA ligase"/>
    <property type="match status" value="1"/>
</dbReference>
<dbReference type="FunFam" id="6.20.10.30:FF:000001">
    <property type="entry name" value="DNA ligase"/>
    <property type="match status" value="1"/>
</dbReference>
<dbReference type="Gene3D" id="6.20.10.30">
    <property type="match status" value="1"/>
</dbReference>
<dbReference type="Gene3D" id="1.10.150.20">
    <property type="entry name" value="5' to 3' exonuclease, C-terminal subdomain"/>
    <property type="match status" value="2"/>
</dbReference>
<dbReference type="Gene3D" id="3.40.50.10190">
    <property type="entry name" value="BRCT domain"/>
    <property type="match status" value="1"/>
</dbReference>
<dbReference type="Gene3D" id="3.30.470.30">
    <property type="entry name" value="DNA ligase/mRNA capping enzyme"/>
    <property type="match status" value="1"/>
</dbReference>
<dbReference type="Gene3D" id="1.10.287.610">
    <property type="entry name" value="Helix hairpin bin"/>
    <property type="match status" value="1"/>
</dbReference>
<dbReference type="Gene3D" id="2.40.50.140">
    <property type="entry name" value="Nucleic acid-binding proteins"/>
    <property type="match status" value="1"/>
</dbReference>
<dbReference type="HAMAP" id="MF_01588">
    <property type="entry name" value="DNA_ligase_A"/>
    <property type="match status" value="1"/>
</dbReference>
<dbReference type="InterPro" id="IPR001357">
    <property type="entry name" value="BRCT_dom"/>
</dbReference>
<dbReference type="InterPro" id="IPR036420">
    <property type="entry name" value="BRCT_dom_sf"/>
</dbReference>
<dbReference type="InterPro" id="IPR041663">
    <property type="entry name" value="DisA/LigA_HHH"/>
</dbReference>
<dbReference type="InterPro" id="IPR001679">
    <property type="entry name" value="DNA_ligase"/>
</dbReference>
<dbReference type="InterPro" id="IPR018239">
    <property type="entry name" value="DNA_ligase_AS"/>
</dbReference>
<dbReference type="InterPro" id="IPR033136">
    <property type="entry name" value="DNA_ligase_CS"/>
</dbReference>
<dbReference type="InterPro" id="IPR013839">
    <property type="entry name" value="DNAligase_adenylation"/>
</dbReference>
<dbReference type="InterPro" id="IPR013840">
    <property type="entry name" value="DNAligase_N"/>
</dbReference>
<dbReference type="InterPro" id="IPR003583">
    <property type="entry name" value="Hlx-hairpin-Hlx_DNA-bd_motif"/>
</dbReference>
<dbReference type="InterPro" id="IPR012340">
    <property type="entry name" value="NA-bd_OB-fold"/>
</dbReference>
<dbReference type="InterPro" id="IPR004150">
    <property type="entry name" value="NAD_DNA_ligase_OB"/>
</dbReference>
<dbReference type="InterPro" id="IPR010994">
    <property type="entry name" value="RuvA_2-like"/>
</dbReference>
<dbReference type="InterPro" id="IPR004149">
    <property type="entry name" value="Znf_DNAligase_C4"/>
</dbReference>
<dbReference type="NCBIfam" id="TIGR00575">
    <property type="entry name" value="dnlj"/>
    <property type="match status" value="1"/>
</dbReference>
<dbReference type="NCBIfam" id="NF005932">
    <property type="entry name" value="PRK07956.1"/>
    <property type="match status" value="1"/>
</dbReference>
<dbReference type="PANTHER" id="PTHR23389">
    <property type="entry name" value="CHROMOSOME TRANSMISSION FIDELITY FACTOR 18"/>
    <property type="match status" value="1"/>
</dbReference>
<dbReference type="PANTHER" id="PTHR23389:SF9">
    <property type="entry name" value="DNA LIGASE"/>
    <property type="match status" value="1"/>
</dbReference>
<dbReference type="Pfam" id="PF00533">
    <property type="entry name" value="BRCT"/>
    <property type="match status" value="1"/>
</dbReference>
<dbReference type="Pfam" id="PF01653">
    <property type="entry name" value="DNA_ligase_aden"/>
    <property type="match status" value="1"/>
</dbReference>
<dbReference type="Pfam" id="PF03120">
    <property type="entry name" value="DNA_ligase_OB"/>
    <property type="match status" value="1"/>
</dbReference>
<dbReference type="Pfam" id="PF03119">
    <property type="entry name" value="DNA_ligase_ZBD"/>
    <property type="match status" value="1"/>
</dbReference>
<dbReference type="Pfam" id="PF12826">
    <property type="entry name" value="HHH_2"/>
    <property type="match status" value="1"/>
</dbReference>
<dbReference type="Pfam" id="PF14520">
    <property type="entry name" value="HHH_5"/>
    <property type="match status" value="1"/>
</dbReference>
<dbReference type="Pfam" id="PF22745">
    <property type="entry name" value="Nlig-Ia"/>
    <property type="match status" value="1"/>
</dbReference>
<dbReference type="PIRSF" id="PIRSF001604">
    <property type="entry name" value="LigA"/>
    <property type="match status" value="1"/>
</dbReference>
<dbReference type="SMART" id="SM00292">
    <property type="entry name" value="BRCT"/>
    <property type="match status" value="1"/>
</dbReference>
<dbReference type="SMART" id="SM00278">
    <property type="entry name" value="HhH1"/>
    <property type="match status" value="4"/>
</dbReference>
<dbReference type="SMART" id="SM00532">
    <property type="entry name" value="LIGANc"/>
    <property type="match status" value="1"/>
</dbReference>
<dbReference type="SUPFAM" id="SSF52113">
    <property type="entry name" value="BRCT domain"/>
    <property type="match status" value="1"/>
</dbReference>
<dbReference type="SUPFAM" id="SSF56091">
    <property type="entry name" value="DNA ligase/mRNA capping enzyme, catalytic domain"/>
    <property type="match status" value="1"/>
</dbReference>
<dbReference type="SUPFAM" id="SSF50249">
    <property type="entry name" value="Nucleic acid-binding proteins"/>
    <property type="match status" value="1"/>
</dbReference>
<dbReference type="SUPFAM" id="SSF47781">
    <property type="entry name" value="RuvA domain 2-like"/>
    <property type="match status" value="1"/>
</dbReference>
<dbReference type="PROSITE" id="PS50172">
    <property type="entry name" value="BRCT"/>
    <property type="match status" value="1"/>
</dbReference>
<dbReference type="PROSITE" id="PS01055">
    <property type="entry name" value="DNA_LIGASE_N1"/>
    <property type="match status" value="1"/>
</dbReference>
<dbReference type="PROSITE" id="PS01056">
    <property type="entry name" value="DNA_LIGASE_N2"/>
    <property type="match status" value="1"/>
</dbReference>
<accession>B7LL73</accession>
<comment type="function">
    <text evidence="1">DNA ligase that catalyzes the formation of phosphodiester linkages between 5'-phosphoryl and 3'-hydroxyl groups in double-stranded DNA using NAD as a coenzyme and as the energy source for the reaction. It is essential for DNA replication and repair of damaged DNA.</text>
</comment>
<comment type="catalytic activity">
    <reaction evidence="1">
        <text>NAD(+) + (deoxyribonucleotide)n-3'-hydroxyl + 5'-phospho-(deoxyribonucleotide)m = (deoxyribonucleotide)n+m + AMP + beta-nicotinamide D-nucleotide.</text>
        <dbReference type="EC" id="6.5.1.2"/>
    </reaction>
</comment>
<comment type="cofactor">
    <cofactor evidence="1">
        <name>Mg(2+)</name>
        <dbReference type="ChEBI" id="CHEBI:18420"/>
    </cofactor>
    <cofactor evidence="1">
        <name>Mn(2+)</name>
        <dbReference type="ChEBI" id="CHEBI:29035"/>
    </cofactor>
</comment>
<comment type="similarity">
    <text evidence="1">Belongs to the NAD-dependent DNA ligase family. LigA subfamily.</text>
</comment>
<protein>
    <recommendedName>
        <fullName evidence="1">DNA ligase</fullName>
        <ecNumber evidence="1">6.5.1.2</ecNumber>
    </recommendedName>
    <alternativeName>
        <fullName evidence="1">Polydeoxyribonucleotide synthase [NAD(+)]</fullName>
    </alternativeName>
</protein>